<sequence>MEGGSVSDDTVTPMMAQYLEIKAQNPGAILFYRMGDFYEMFFDDAALAAEALDIALTKRGKHRGEDIAMCGVPIHAAEGYLLTLIRKGFRVAIAEQMEDPAEAKKRGSKSVVRREVVRLVTPGTLTEDTLLEARRHNYLCAFAEIRDEAALAWADISTGELSVTACPLPRLMPELARLAPRELLVADERELDWIEEVGCALTPLSRASFDSASAEKRLCALFGVGTLESFGNFTRAELSAMGALVDYLDLTQRGKLPLLRPPVRETVGGTVQIDAATRRNLEITQALAGGRDGSLLSAVDRTVTAPGARLLERRLSSPTRDLGLIHERLGAVRWLTEEPRLREEMRASLRRVPDMDRALSRLALDRAGPRDMAAIRAGLAQAQEIAQRMPAEAPALVTRALEALGGHEALVDLLDQALVAEPPLLARDGGFIAQGFDADLDETRRLRDEGRGVIASMQAGFIEVTGIQSLKIKHNNVLGYFIEVTSTHAEKMLSAPLSERFIHRQTTAGQVRFTTVELSELETRILNAGNRALDLEKMHFAALRTAILDLAGQIGRAARSLAELDLISAFADLAAIEDWTEPEIDDSRAFAIEAGRHPVVERALRRTGTPFVANHCDLSTGGTPAVWLITGPNMAGKSTFLRQNALIALLAQAGSFVPARRAHIGLVSQIFSRVGASDDLARGRSTFMVEMVETAAILNQADDRALVILDEIGRGTATWDGLSIAWATLEHLHDRNRCRALFATHYHEMTALAGKLKGVENATVAVKEWEGDVIFLHEVRRGAADRSYGVQVARLAGLPASVIERARTVLDALESGERESGGRRQTLIDDLPLFRAAPPPPAPAAPKTSPVEERLREIQPDDLSPREALKLLYDLRALLT</sequence>
<organism>
    <name type="scientific">Cereibacter sphaeroides (strain ATCC 17029 / ATH 2.4.9)</name>
    <name type="common">Rhodobacter sphaeroides</name>
    <dbReference type="NCBI Taxonomy" id="349101"/>
    <lineage>
        <taxon>Bacteria</taxon>
        <taxon>Pseudomonadati</taxon>
        <taxon>Pseudomonadota</taxon>
        <taxon>Alphaproteobacteria</taxon>
        <taxon>Rhodobacterales</taxon>
        <taxon>Paracoccaceae</taxon>
        <taxon>Cereibacter</taxon>
    </lineage>
</organism>
<accession>A3PNR5</accession>
<proteinExistence type="inferred from homology"/>
<name>MUTS_CERS1</name>
<keyword id="KW-0067">ATP-binding</keyword>
<keyword id="KW-0227">DNA damage</keyword>
<keyword id="KW-0234">DNA repair</keyword>
<keyword id="KW-0238">DNA-binding</keyword>
<keyword id="KW-0547">Nucleotide-binding</keyword>
<comment type="function">
    <text evidence="1">This protein is involved in the repair of mismatches in DNA. It is possible that it carries out the mismatch recognition step. This protein has a weak ATPase activity.</text>
</comment>
<comment type="similarity">
    <text evidence="1">Belongs to the DNA mismatch repair MutS family.</text>
</comment>
<feature type="chain" id="PRO_0000335212" description="DNA mismatch repair protein MutS">
    <location>
        <begin position="1"/>
        <end position="880"/>
    </location>
</feature>
<feature type="region of interest" description="Disordered" evidence="2">
    <location>
        <begin position="835"/>
        <end position="860"/>
    </location>
</feature>
<feature type="compositionally biased region" description="Basic and acidic residues" evidence="2">
    <location>
        <begin position="850"/>
        <end position="860"/>
    </location>
</feature>
<feature type="binding site" evidence="1">
    <location>
        <begin position="631"/>
        <end position="638"/>
    </location>
    <ligand>
        <name>ATP</name>
        <dbReference type="ChEBI" id="CHEBI:30616"/>
    </ligand>
</feature>
<gene>
    <name evidence="1" type="primary">mutS</name>
    <name type="ordered locus">Rsph17029_2879</name>
</gene>
<protein>
    <recommendedName>
        <fullName evidence="1">DNA mismatch repair protein MutS</fullName>
    </recommendedName>
</protein>
<evidence type="ECO:0000255" key="1">
    <source>
        <dbReference type="HAMAP-Rule" id="MF_00096"/>
    </source>
</evidence>
<evidence type="ECO:0000256" key="2">
    <source>
        <dbReference type="SAM" id="MobiDB-lite"/>
    </source>
</evidence>
<reference key="1">
    <citation type="submission" date="2007-02" db="EMBL/GenBank/DDBJ databases">
        <title>Complete sequence of chromosome 1 of Rhodobacter sphaeroides ATCC 17029.</title>
        <authorList>
            <person name="Copeland A."/>
            <person name="Lucas S."/>
            <person name="Lapidus A."/>
            <person name="Barry K."/>
            <person name="Detter J.C."/>
            <person name="Glavina del Rio T."/>
            <person name="Hammon N."/>
            <person name="Israni S."/>
            <person name="Dalin E."/>
            <person name="Tice H."/>
            <person name="Pitluck S."/>
            <person name="Kiss H."/>
            <person name="Brettin T."/>
            <person name="Bruce D."/>
            <person name="Han C."/>
            <person name="Tapia R."/>
            <person name="Gilna P."/>
            <person name="Schmutz J."/>
            <person name="Larimer F."/>
            <person name="Land M."/>
            <person name="Hauser L."/>
            <person name="Kyrpides N."/>
            <person name="Mikhailova N."/>
            <person name="Richardson P."/>
            <person name="Mackenzie C."/>
            <person name="Choudhary M."/>
            <person name="Donohue T.J."/>
            <person name="Kaplan S."/>
        </authorList>
    </citation>
    <scope>NUCLEOTIDE SEQUENCE [LARGE SCALE GENOMIC DNA]</scope>
    <source>
        <strain>ATCC 17029 / ATH 2.4.9</strain>
    </source>
</reference>
<dbReference type="EMBL" id="CP000577">
    <property type="protein sequence ID" value="ABN77981.1"/>
    <property type="molecule type" value="Genomic_DNA"/>
</dbReference>
<dbReference type="SMR" id="A3PNR5"/>
<dbReference type="KEGG" id="rsh:Rsph17029_2879"/>
<dbReference type="HOGENOM" id="CLU_002472_4_0_5"/>
<dbReference type="GO" id="GO:0005829">
    <property type="term" value="C:cytosol"/>
    <property type="evidence" value="ECO:0007669"/>
    <property type="project" value="TreeGrafter"/>
</dbReference>
<dbReference type="GO" id="GO:0005524">
    <property type="term" value="F:ATP binding"/>
    <property type="evidence" value="ECO:0007669"/>
    <property type="project" value="UniProtKB-UniRule"/>
</dbReference>
<dbReference type="GO" id="GO:0140664">
    <property type="term" value="F:ATP-dependent DNA damage sensor activity"/>
    <property type="evidence" value="ECO:0007669"/>
    <property type="project" value="InterPro"/>
</dbReference>
<dbReference type="GO" id="GO:0003684">
    <property type="term" value="F:damaged DNA binding"/>
    <property type="evidence" value="ECO:0007669"/>
    <property type="project" value="UniProtKB-UniRule"/>
</dbReference>
<dbReference type="GO" id="GO:0030983">
    <property type="term" value="F:mismatched DNA binding"/>
    <property type="evidence" value="ECO:0007669"/>
    <property type="project" value="InterPro"/>
</dbReference>
<dbReference type="GO" id="GO:0006298">
    <property type="term" value="P:mismatch repair"/>
    <property type="evidence" value="ECO:0007669"/>
    <property type="project" value="UniProtKB-UniRule"/>
</dbReference>
<dbReference type="CDD" id="cd03284">
    <property type="entry name" value="ABC_MutS1"/>
    <property type="match status" value="1"/>
</dbReference>
<dbReference type="FunFam" id="3.40.1170.10:FF:000001">
    <property type="entry name" value="DNA mismatch repair protein MutS"/>
    <property type="match status" value="1"/>
</dbReference>
<dbReference type="Gene3D" id="1.10.1420.10">
    <property type="match status" value="2"/>
</dbReference>
<dbReference type="Gene3D" id="6.10.140.430">
    <property type="match status" value="1"/>
</dbReference>
<dbReference type="Gene3D" id="3.40.1170.10">
    <property type="entry name" value="DNA repair protein MutS, domain I"/>
    <property type="match status" value="1"/>
</dbReference>
<dbReference type="Gene3D" id="3.30.420.110">
    <property type="entry name" value="MutS, connector domain"/>
    <property type="match status" value="1"/>
</dbReference>
<dbReference type="Gene3D" id="3.40.50.300">
    <property type="entry name" value="P-loop containing nucleotide triphosphate hydrolases"/>
    <property type="match status" value="1"/>
</dbReference>
<dbReference type="HAMAP" id="MF_00096">
    <property type="entry name" value="MutS"/>
    <property type="match status" value="1"/>
</dbReference>
<dbReference type="InterPro" id="IPR005748">
    <property type="entry name" value="DNA_mismatch_repair_MutS"/>
</dbReference>
<dbReference type="InterPro" id="IPR007695">
    <property type="entry name" value="DNA_mismatch_repair_MutS-lik_N"/>
</dbReference>
<dbReference type="InterPro" id="IPR017261">
    <property type="entry name" value="DNA_mismatch_repair_MutS/MSH"/>
</dbReference>
<dbReference type="InterPro" id="IPR000432">
    <property type="entry name" value="DNA_mismatch_repair_MutS_C"/>
</dbReference>
<dbReference type="InterPro" id="IPR007861">
    <property type="entry name" value="DNA_mismatch_repair_MutS_clamp"/>
</dbReference>
<dbReference type="InterPro" id="IPR007696">
    <property type="entry name" value="DNA_mismatch_repair_MutS_core"/>
</dbReference>
<dbReference type="InterPro" id="IPR016151">
    <property type="entry name" value="DNA_mismatch_repair_MutS_N"/>
</dbReference>
<dbReference type="InterPro" id="IPR036187">
    <property type="entry name" value="DNA_mismatch_repair_MutS_sf"/>
</dbReference>
<dbReference type="InterPro" id="IPR007860">
    <property type="entry name" value="DNA_mmatch_repair_MutS_con_dom"/>
</dbReference>
<dbReference type="InterPro" id="IPR045076">
    <property type="entry name" value="MutS"/>
</dbReference>
<dbReference type="InterPro" id="IPR036678">
    <property type="entry name" value="MutS_con_dom_sf"/>
</dbReference>
<dbReference type="InterPro" id="IPR027417">
    <property type="entry name" value="P-loop_NTPase"/>
</dbReference>
<dbReference type="NCBIfam" id="TIGR01070">
    <property type="entry name" value="mutS1"/>
    <property type="match status" value="1"/>
</dbReference>
<dbReference type="NCBIfam" id="NF003810">
    <property type="entry name" value="PRK05399.1"/>
    <property type="match status" value="1"/>
</dbReference>
<dbReference type="PANTHER" id="PTHR11361:SF34">
    <property type="entry name" value="DNA MISMATCH REPAIR PROTEIN MSH1, MITOCHONDRIAL"/>
    <property type="match status" value="1"/>
</dbReference>
<dbReference type="PANTHER" id="PTHR11361">
    <property type="entry name" value="DNA MISMATCH REPAIR PROTEIN MUTS FAMILY MEMBER"/>
    <property type="match status" value="1"/>
</dbReference>
<dbReference type="Pfam" id="PF01624">
    <property type="entry name" value="MutS_I"/>
    <property type="match status" value="1"/>
</dbReference>
<dbReference type="Pfam" id="PF05188">
    <property type="entry name" value="MutS_II"/>
    <property type="match status" value="1"/>
</dbReference>
<dbReference type="Pfam" id="PF05192">
    <property type="entry name" value="MutS_III"/>
    <property type="match status" value="1"/>
</dbReference>
<dbReference type="Pfam" id="PF05190">
    <property type="entry name" value="MutS_IV"/>
    <property type="match status" value="1"/>
</dbReference>
<dbReference type="Pfam" id="PF00488">
    <property type="entry name" value="MutS_V"/>
    <property type="match status" value="1"/>
</dbReference>
<dbReference type="PIRSF" id="PIRSF037677">
    <property type="entry name" value="DNA_mis_repair_Msh6"/>
    <property type="match status" value="1"/>
</dbReference>
<dbReference type="SMART" id="SM00534">
    <property type="entry name" value="MUTSac"/>
    <property type="match status" value="1"/>
</dbReference>
<dbReference type="SMART" id="SM00533">
    <property type="entry name" value="MUTSd"/>
    <property type="match status" value="1"/>
</dbReference>
<dbReference type="SUPFAM" id="SSF55271">
    <property type="entry name" value="DNA repair protein MutS, domain I"/>
    <property type="match status" value="1"/>
</dbReference>
<dbReference type="SUPFAM" id="SSF53150">
    <property type="entry name" value="DNA repair protein MutS, domain II"/>
    <property type="match status" value="1"/>
</dbReference>
<dbReference type="SUPFAM" id="SSF48334">
    <property type="entry name" value="DNA repair protein MutS, domain III"/>
    <property type="match status" value="1"/>
</dbReference>
<dbReference type="SUPFAM" id="SSF52540">
    <property type="entry name" value="P-loop containing nucleoside triphosphate hydrolases"/>
    <property type="match status" value="1"/>
</dbReference>
<dbReference type="PROSITE" id="PS00486">
    <property type="entry name" value="DNA_MISMATCH_REPAIR_2"/>
    <property type="match status" value="1"/>
</dbReference>